<accession>Q06SJ4</accession>
<geneLocation type="chloroplast"/>
<proteinExistence type="inferred from homology"/>
<organism>
    <name type="scientific">Stigeoclonium helveticum</name>
    <name type="common">Green alga</name>
    <dbReference type="NCBI Taxonomy" id="55999"/>
    <lineage>
        <taxon>Eukaryota</taxon>
        <taxon>Viridiplantae</taxon>
        <taxon>Chlorophyta</taxon>
        <taxon>core chlorophytes</taxon>
        <taxon>Chlorophyceae</taxon>
        <taxon>OCC clade</taxon>
        <taxon>Chaetophorales</taxon>
        <taxon>Chaetophoraceae</taxon>
        <taxon>Stigeoclonium</taxon>
    </lineage>
</organism>
<name>RK36_STIHE</name>
<sequence>MKVRASVKKICANCRLIRRKRKILVICVNPKHKQRQG</sequence>
<dbReference type="EMBL" id="DQ630521">
    <property type="protein sequence ID" value="ABF60187.1"/>
    <property type="molecule type" value="Genomic_DNA"/>
</dbReference>
<dbReference type="RefSeq" id="YP_764372.1">
    <property type="nucleotide sequence ID" value="NC_008372.1"/>
</dbReference>
<dbReference type="SMR" id="Q06SJ4"/>
<dbReference type="GeneID" id="4308367"/>
<dbReference type="GO" id="GO:0009507">
    <property type="term" value="C:chloroplast"/>
    <property type="evidence" value="ECO:0007669"/>
    <property type="project" value="UniProtKB-SubCell"/>
</dbReference>
<dbReference type="GO" id="GO:1990904">
    <property type="term" value="C:ribonucleoprotein complex"/>
    <property type="evidence" value="ECO:0007669"/>
    <property type="project" value="UniProtKB-KW"/>
</dbReference>
<dbReference type="GO" id="GO:0005840">
    <property type="term" value="C:ribosome"/>
    <property type="evidence" value="ECO:0007669"/>
    <property type="project" value="UniProtKB-KW"/>
</dbReference>
<dbReference type="GO" id="GO:0003735">
    <property type="term" value="F:structural constituent of ribosome"/>
    <property type="evidence" value="ECO:0007669"/>
    <property type="project" value="InterPro"/>
</dbReference>
<dbReference type="GO" id="GO:0006412">
    <property type="term" value="P:translation"/>
    <property type="evidence" value="ECO:0007669"/>
    <property type="project" value="UniProtKB-UniRule"/>
</dbReference>
<dbReference type="HAMAP" id="MF_00251">
    <property type="entry name" value="Ribosomal_bL36"/>
    <property type="match status" value="1"/>
</dbReference>
<dbReference type="InterPro" id="IPR000473">
    <property type="entry name" value="Ribosomal_bL36"/>
</dbReference>
<dbReference type="InterPro" id="IPR035977">
    <property type="entry name" value="Ribosomal_bL36_sp"/>
</dbReference>
<dbReference type="NCBIfam" id="TIGR01022">
    <property type="entry name" value="rpmJ_bact"/>
    <property type="match status" value="1"/>
</dbReference>
<dbReference type="PANTHER" id="PTHR42888">
    <property type="entry name" value="50S RIBOSOMAL PROTEIN L36, CHLOROPLASTIC"/>
    <property type="match status" value="1"/>
</dbReference>
<dbReference type="PANTHER" id="PTHR42888:SF1">
    <property type="entry name" value="LARGE RIBOSOMAL SUBUNIT PROTEIN BL36C"/>
    <property type="match status" value="1"/>
</dbReference>
<dbReference type="Pfam" id="PF00444">
    <property type="entry name" value="Ribosomal_L36"/>
    <property type="match status" value="1"/>
</dbReference>
<dbReference type="SUPFAM" id="SSF57840">
    <property type="entry name" value="Ribosomal protein L36"/>
    <property type="match status" value="1"/>
</dbReference>
<dbReference type="PROSITE" id="PS00828">
    <property type="entry name" value="RIBOSOMAL_L36"/>
    <property type="match status" value="1"/>
</dbReference>
<evidence type="ECO:0000255" key="1">
    <source>
        <dbReference type="HAMAP-Rule" id="MF_00251"/>
    </source>
</evidence>
<evidence type="ECO:0000305" key="2"/>
<comment type="subcellular location">
    <subcellularLocation>
        <location>Plastid</location>
        <location>Chloroplast</location>
    </subcellularLocation>
</comment>
<comment type="similarity">
    <text evidence="1">Belongs to the bacterial ribosomal protein bL36 family.</text>
</comment>
<reference key="1">
    <citation type="journal article" date="2006" name="Mol. Genet. Genomics">
        <title>Distinctive architecture of the chloroplast genome in the chlorophycean green alga Stigeoclonium helveticum.</title>
        <authorList>
            <person name="Belanger A.-S."/>
            <person name="Brouard J.-S."/>
            <person name="Charlebois P."/>
            <person name="Otis C."/>
            <person name="Lemieux C."/>
            <person name="Turmel M."/>
        </authorList>
    </citation>
    <scope>NUCLEOTIDE SEQUENCE [LARGE SCALE GENOMIC DNA]</scope>
    <source>
        <strain>UTEX 441</strain>
    </source>
</reference>
<feature type="chain" id="PRO_0000276839" description="Large ribosomal subunit protein bL36c">
    <location>
        <begin position="1"/>
        <end position="37"/>
    </location>
</feature>
<protein>
    <recommendedName>
        <fullName evidence="1">Large ribosomal subunit protein bL36c</fullName>
    </recommendedName>
    <alternativeName>
        <fullName evidence="2">50S ribosomal protein L36, chloroplastic</fullName>
    </alternativeName>
</protein>
<keyword id="KW-0150">Chloroplast</keyword>
<keyword id="KW-0934">Plastid</keyword>
<keyword id="KW-0687">Ribonucleoprotein</keyword>
<keyword id="KW-0689">Ribosomal protein</keyword>
<gene>
    <name evidence="1" type="primary">rpl36</name>
</gene>